<dbReference type="EC" id="2.1.1.242" evidence="1"/>
<dbReference type="EMBL" id="L42023">
    <property type="protein sequence ID" value="AAC22506.1"/>
    <property type="status" value="ALT_INIT"/>
    <property type="molecule type" value="Genomic_DNA"/>
</dbReference>
<dbReference type="PIR" id="I64159">
    <property type="entry name" value="I64159"/>
</dbReference>
<dbReference type="RefSeq" id="NP_439009.1">
    <property type="nucleotide sequence ID" value="NC_000907.1"/>
</dbReference>
<dbReference type="SMR" id="P44901"/>
<dbReference type="STRING" id="71421.HI_0849"/>
<dbReference type="DNASU" id="949861"/>
<dbReference type="EnsemblBacteria" id="AAC22506">
    <property type="protein sequence ID" value="AAC22506"/>
    <property type="gene ID" value="HI_0849"/>
</dbReference>
<dbReference type="KEGG" id="hin:HI_0849"/>
<dbReference type="PATRIC" id="fig|71421.8.peg.890"/>
<dbReference type="eggNOG" id="COG0742">
    <property type="taxonomic scope" value="Bacteria"/>
</dbReference>
<dbReference type="HOGENOM" id="CLU_076324_0_0_6"/>
<dbReference type="OrthoDB" id="3191794at2"/>
<dbReference type="PhylomeDB" id="P44901"/>
<dbReference type="BioCyc" id="HINF71421:G1GJ1-889-MONOMER"/>
<dbReference type="Proteomes" id="UP000000579">
    <property type="component" value="Chromosome"/>
</dbReference>
<dbReference type="GO" id="GO:0005737">
    <property type="term" value="C:cytoplasm"/>
    <property type="evidence" value="ECO:0007669"/>
    <property type="project" value="UniProtKB-SubCell"/>
</dbReference>
<dbReference type="GO" id="GO:0036308">
    <property type="term" value="F:16S rRNA (guanine(1516)-N(2))-methyltransferase activity"/>
    <property type="evidence" value="ECO:0000318"/>
    <property type="project" value="GO_Central"/>
</dbReference>
<dbReference type="GO" id="GO:0070475">
    <property type="term" value="P:rRNA base methylation"/>
    <property type="evidence" value="ECO:0000318"/>
    <property type="project" value="GO_Central"/>
</dbReference>
<dbReference type="Gene3D" id="3.40.50.150">
    <property type="entry name" value="Vaccinia Virus protein VP39"/>
    <property type="match status" value="1"/>
</dbReference>
<dbReference type="Gene3D" id="3.40.1630.10">
    <property type="entry name" value="YhiQ-like domain"/>
    <property type="match status" value="1"/>
</dbReference>
<dbReference type="HAMAP" id="MF_01523">
    <property type="entry name" value="16SrRNA_methyltr_J"/>
    <property type="match status" value="1"/>
</dbReference>
<dbReference type="InterPro" id="IPR007536">
    <property type="entry name" value="16SrRNA_methylTrfase_J"/>
</dbReference>
<dbReference type="InterPro" id="IPR029063">
    <property type="entry name" value="SAM-dependent_MTases_sf"/>
</dbReference>
<dbReference type="PANTHER" id="PTHR36112">
    <property type="entry name" value="RIBOSOMAL RNA SMALL SUBUNIT METHYLTRANSFERASE J"/>
    <property type="match status" value="1"/>
</dbReference>
<dbReference type="PANTHER" id="PTHR36112:SF1">
    <property type="entry name" value="RIBOSOMAL RNA SMALL SUBUNIT METHYLTRANSFERASE J"/>
    <property type="match status" value="1"/>
</dbReference>
<dbReference type="Pfam" id="PF04445">
    <property type="entry name" value="SAM_MT"/>
    <property type="match status" value="1"/>
</dbReference>
<dbReference type="SUPFAM" id="SSF53335">
    <property type="entry name" value="S-adenosyl-L-methionine-dependent methyltransferases"/>
    <property type="match status" value="1"/>
</dbReference>
<accession>P44901</accession>
<keyword id="KW-0963">Cytoplasm</keyword>
<keyword id="KW-0489">Methyltransferase</keyword>
<keyword id="KW-1185">Reference proteome</keyword>
<keyword id="KW-0698">rRNA processing</keyword>
<keyword id="KW-0949">S-adenosyl-L-methionine</keyword>
<keyword id="KW-0808">Transferase</keyword>
<protein>
    <recommendedName>
        <fullName evidence="1">Ribosomal RNA small subunit methyltransferase J</fullName>
        <ecNumber evidence="1">2.1.1.242</ecNumber>
    </recommendedName>
    <alternativeName>
        <fullName evidence="1">16S rRNA m2G1516 methyltransferase</fullName>
    </alternativeName>
    <alternativeName>
        <fullName evidence="1">rRNA (guanine-N(2)-)-methyltransferase</fullName>
    </alternativeName>
</protein>
<evidence type="ECO:0000255" key="1">
    <source>
        <dbReference type="HAMAP-Rule" id="MF_01523"/>
    </source>
</evidence>
<evidence type="ECO:0000305" key="2"/>
<name>RSMJ_HAEIN</name>
<gene>
    <name evidence="1" type="primary">rsmJ</name>
    <name type="ordered locus">HI_0849</name>
</gene>
<comment type="function">
    <text evidence="1">Specifically methylates the guanosine in position 1516 of 16S rRNA.</text>
</comment>
<comment type="catalytic activity">
    <reaction evidence="1">
        <text>guanosine(1516) in 16S rRNA + S-adenosyl-L-methionine = N(2)-methylguanosine(1516) in 16S rRNA + S-adenosyl-L-homocysteine + H(+)</text>
        <dbReference type="Rhea" id="RHEA:43220"/>
        <dbReference type="Rhea" id="RHEA-COMP:10412"/>
        <dbReference type="Rhea" id="RHEA-COMP:10413"/>
        <dbReference type="ChEBI" id="CHEBI:15378"/>
        <dbReference type="ChEBI" id="CHEBI:57856"/>
        <dbReference type="ChEBI" id="CHEBI:59789"/>
        <dbReference type="ChEBI" id="CHEBI:74269"/>
        <dbReference type="ChEBI" id="CHEBI:74481"/>
        <dbReference type="EC" id="2.1.1.242"/>
    </reaction>
</comment>
<comment type="subcellular location">
    <subcellularLocation>
        <location evidence="1">Cytoplasm</location>
    </subcellularLocation>
</comment>
<comment type="similarity">
    <text evidence="1">Belongs to the methyltransferase superfamily. RsmJ family.</text>
</comment>
<comment type="sequence caution" evidence="2">
    <conflict type="erroneous initiation">
        <sequence resource="EMBL-CDS" id="AAC22506"/>
    </conflict>
    <text>Truncated N-terminus.</text>
</comment>
<proteinExistence type="inferred from homology"/>
<sequence length="257" mass="28549">MAHSQVGIQLISESTEKTLAELIALCAEHNIIHNEKSPLALVQTDDRLELRKLDEPKLGAVYVDFVGGTMAHRRKFGGGRGEAVAKAVGIKGSALPTVIDATAGLGRDAFVLAAIGCQVRLVERHPVVFLLLQDGLNRAYQDEEIGEMLQQNLHLLNVQHINELDPNSDYADVVYLDPMYPHKQKSALVKKEMRVFQHLVGADLDADELLLPALQLAKKRVVVKRPDYAEFLCGKQPHFSHETKNHRFDIYMGASQC</sequence>
<feature type="chain" id="PRO_0000212069" description="Ribosomal RNA small subunit methyltransferase J">
    <location>
        <begin position="1"/>
        <end position="257"/>
    </location>
</feature>
<feature type="binding site" evidence="1">
    <location>
        <begin position="107"/>
        <end position="108"/>
    </location>
    <ligand>
        <name>S-adenosyl-L-methionine</name>
        <dbReference type="ChEBI" id="CHEBI:59789"/>
    </ligand>
</feature>
<feature type="binding site" evidence="1">
    <location>
        <begin position="123"/>
        <end position="124"/>
    </location>
    <ligand>
        <name>S-adenosyl-L-methionine</name>
        <dbReference type="ChEBI" id="CHEBI:59789"/>
    </ligand>
</feature>
<feature type="binding site" evidence="1">
    <location>
        <position position="177"/>
    </location>
    <ligand>
        <name>S-adenosyl-L-methionine</name>
        <dbReference type="ChEBI" id="CHEBI:59789"/>
    </ligand>
</feature>
<reference key="1">
    <citation type="journal article" date="1995" name="Science">
        <title>Whole-genome random sequencing and assembly of Haemophilus influenzae Rd.</title>
        <authorList>
            <person name="Fleischmann R.D."/>
            <person name="Adams M.D."/>
            <person name="White O."/>
            <person name="Clayton R.A."/>
            <person name="Kirkness E.F."/>
            <person name="Kerlavage A.R."/>
            <person name="Bult C.J."/>
            <person name="Tomb J.-F."/>
            <person name="Dougherty B.A."/>
            <person name="Merrick J.M."/>
            <person name="McKenney K."/>
            <person name="Sutton G.G."/>
            <person name="FitzHugh W."/>
            <person name="Fields C.A."/>
            <person name="Gocayne J.D."/>
            <person name="Scott J.D."/>
            <person name="Shirley R."/>
            <person name="Liu L.-I."/>
            <person name="Glodek A."/>
            <person name="Kelley J.M."/>
            <person name="Weidman J.F."/>
            <person name="Phillips C.A."/>
            <person name="Spriggs T."/>
            <person name="Hedblom E."/>
            <person name="Cotton M.D."/>
            <person name="Utterback T.R."/>
            <person name="Hanna M.C."/>
            <person name="Nguyen D.T."/>
            <person name="Saudek D.M."/>
            <person name="Brandon R.C."/>
            <person name="Fine L.D."/>
            <person name="Fritchman J.L."/>
            <person name="Fuhrmann J.L."/>
            <person name="Geoghagen N.S.M."/>
            <person name="Gnehm C.L."/>
            <person name="McDonald L.A."/>
            <person name="Small K.V."/>
            <person name="Fraser C.M."/>
            <person name="Smith H.O."/>
            <person name="Venter J.C."/>
        </authorList>
    </citation>
    <scope>NUCLEOTIDE SEQUENCE [LARGE SCALE GENOMIC DNA]</scope>
    <source>
        <strain>ATCC 51907 / DSM 11121 / KW20 / Rd</strain>
    </source>
</reference>
<reference key="2">
    <citation type="submission" date="1996-09" db="EMBL/GenBank/DDBJ databases">
        <authorList>
            <person name="White O."/>
            <person name="Clayton R.A."/>
            <person name="Kerlavage A.R."/>
            <person name="Fleischmann R.D."/>
        </authorList>
    </citation>
    <scope>SEQUENCE REVISION</scope>
</reference>
<organism>
    <name type="scientific">Haemophilus influenzae (strain ATCC 51907 / DSM 11121 / KW20 / Rd)</name>
    <dbReference type="NCBI Taxonomy" id="71421"/>
    <lineage>
        <taxon>Bacteria</taxon>
        <taxon>Pseudomonadati</taxon>
        <taxon>Pseudomonadota</taxon>
        <taxon>Gammaproteobacteria</taxon>
        <taxon>Pasteurellales</taxon>
        <taxon>Pasteurellaceae</taxon>
        <taxon>Haemophilus</taxon>
    </lineage>
</organism>